<comment type="function">
    <text evidence="1">Gluconolactonase with low activity towards other sugar lactones, including gulonolactone and galactonolactone. Catalyzes a key step in ascorbic acid (vitamin C) biosynthesis. Can also hydrolyze diisopropyl phosphorofluoridate and phenylacetate (in vitro). Calcium-binding protein. Modulates Ca(2+) signaling, and Ca(2+)-dependent cellular processes and enzyme activities (By similarity).</text>
</comment>
<comment type="catalytic activity">
    <reaction>
        <text>D-glucono-1,5-lactone + H2O = D-gluconate + H(+)</text>
        <dbReference type="Rhea" id="RHEA:10440"/>
        <dbReference type="ChEBI" id="CHEBI:15377"/>
        <dbReference type="ChEBI" id="CHEBI:15378"/>
        <dbReference type="ChEBI" id="CHEBI:16217"/>
        <dbReference type="ChEBI" id="CHEBI:18391"/>
        <dbReference type="EC" id="3.1.1.17"/>
    </reaction>
</comment>
<comment type="cofactor">
    <cofactor evidence="1">
        <name>Zn(2+)</name>
        <dbReference type="ChEBI" id="CHEBI:29105"/>
    </cofactor>
    <cofactor evidence="1">
        <name>Mn(2+)</name>
        <dbReference type="ChEBI" id="CHEBI:29035"/>
    </cofactor>
    <cofactor evidence="1">
        <name>Ca(2+)</name>
        <dbReference type="ChEBI" id="CHEBI:29108"/>
    </cofactor>
    <cofactor evidence="1">
        <name>Mg(2+)</name>
        <dbReference type="ChEBI" id="CHEBI:18420"/>
    </cofactor>
    <text evidence="1">Binds 1 divalent metal cation per subunit. Most active with Zn(2+) and Mn(2+) ions. The physiological cofactor is most likely Ca(2+) or Mg(2+).</text>
</comment>
<comment type="pathway">
    <text>Cofactor biosynthesis; L-ascorbate biosynthesis via UDP-alpha-D-glucuronate pathway; L-ascorbate from UDP-alpha-D-glucuronate: step 3/4.</text>
</comment>
<comment type="subunit">
    <text evidence="1">Monomer.</text>
</comment>
<comment type="subcellular location">
    <subcellularLocation>
        <location evidence="1">Cytoplasm</location>
    </subcellularLocation>
</comment>
<comment type="similarity">
    <text evidence="3">Belongs to the SMP-30/CGR1 family.</text>
</comment>
<protein>
    <recommendedName>
        <fullName>Regucalcin</fullName>
        <shortName>RC</shortName>
    </recommendedName>
    <alternativeName>
        <fullName>Gluconolactonase</fullName>
        <shortName>GNL</shortName>
        <ecNumber>3.1.1.17</ecNumber>
    </alternativeName>
    <alternativeName>
        <fullName>Senescence marker protein 30</fullName>
        <shortName>SMP-30</shortName>
    </alternativeName>
</protein>
<feature type="chain" id="PRO_0000173048" description="Regucalcin">
    <location>
        <begin position="1"/>
        <end position="299"/>
    </location>
</feature>
<feature type="active site" description="Proton donor/acceptor" evidence="1">
    <location>
        <position position="204"/>
    </location>
</feature>
<feature type="binding site" evidence="1">
    <location>
        <position position="18"/>
    </location>
    <ligand>
        <name>a divalent metal cation</name>
        <dbReference type="ChEBI" id="CHEBI:60240"/>
    </ligand>
</feature>
<feature type="binding site" evidence="1">
    <location>
        <position position="101"/>
    </location>
    <ligand>
        <name>substrate</name>
    </ligand>
</feature>
<feature type="binding site" evidence="1">
    <location>
        <position position="103"/>
    </location>
    <ligand>
        <name>substrate</name>
    </ligand>
</feature>
<feature type="binding site" evidence="1">
    <location>
        <position position="121"/>
    </location>
    <ligand>
        <name>substrate</name>
    </ligand>
</feature>
<feature type="binding site" evidence="1">
    <location>
        <position position="154"/>
    </location>
    <ligand>
        <name>a divalent metal cation</name>
        <dbReference type="ChEBI" id="CHEBI:60240"/>
    </ligand>
</feature>
<feature type="binding site" evidence="1">
    <location>
        <position position="204"/>
    </location>
    <ligand>
        <name>a divalent metal cation</name>
        <dbReference type="ChEBI" id="CHEBI:60240"/>
    </ligand>
</feature>
<feature type="modified residue" description="N6-succinyllysine" evidence="2">
    <location>
        <position position="144"/>
    </location>
</feature>
<feature type="modified residue" description="N6-succinyllysine" evidence="2">
    <location>
        <position position="244"/>
    </location>
</feature>
<feature type="modified residue" description="N6-succinyllysine" evidence="2">
    <location>
        <position position="253"/>
    </location>
</feature>
<evidence type="ECO:0000250" key="1"/>
<evidence type="ECO:0000250" key="2">
    <source>
        <dbReference type="UniProtKB" id="Q64374"/>
    </source>
</evidence>
<evidence type="ECO:0000305" key="3"/>
<reference key="1">
    <citation type="journal article" date="2000" name="Int. J. Mol. Med.">
        <title>The gene of Ca2+-binding protein regucalcin is highly conserved in vertebrate species.</title>
        <authorList>
            <person name="Misawa H."/>
            <person name="Yamaguchi M."/>
        </authorList>
    </citation>
    <scope>NUCLEOTIDE SEQUENCE [MRNA]</scope>
    <source>
        <tissue>Liver</tissue>
    </source>
</reference>
<gene>
    <name type="primary">RGN</name>
    <name type="synonym">SMP30</name>
</gene>
<sequence>MSSIKIECVLPENCHCGESPVWEEASGSLLFVDIPGKKFCRWNPLTKAVQRMTMDAPVTSVALRKSGGYVATVGTKFCALNLEDQSVVALATVDKDKKNNRFNDGKVDPAGRYFAGTMAEETAPAVLERHQGSLYALFPDHQVKKYFDQVDISNGLDWSLDHKIFYYIDSLAYSVDAFDYDLQTGQISNRRSIYKLEKEEQIPDGMCIDTEGKLWVACYNGGRVIRLDPETGKRLQTVKLPVDKTTSCCFGGKDYSEMYVTCARDGLDPDSLSRQPEAGGIFKITGLGVKGIPPYSYAG</sequence>
<organism>
    <name type="scientific">Oryctolagus cuniculus</name>
    <name type="common">Rabbit</name>
    <dbReference type="NCBI Taxonomy" id="9986"/>
    <lineage>
        <taxon>Eukaryota</taxon>
        <taxon>Metazoa</taxon>
        <taxon>Chordata</taxon>
        <taxon>Craniata</taxon>
        <taxon>Vertebrata</taxon>
        <taxon>Euteleostomi</taxon>
        <taxon>Mammalia</taxon>
        <taxon>Eutheria</taxon>
        <taxon>Euarchontoglires</taxon>
        <taxon>Glires</taxon>
        <taxon>Lagomorpha</taxon>
        <taxon>Leporidae</taxon>
        <taxon>Oryctolagus</taxon>
    </lineage>
</organism>
<name>RGN_RABIT</name>
<accession>Q9TTJ6</accession>
<keyword id="KW-0060">Ascorbate biosynthesis</keyword>
<keyword id="KW-0106">Calcium</keyword>
<keyword id="KW-0963">Cytoplasm</keyword>
<keyword id="KW-0378">Hydrolase</keyword>
<keyword id="KW-0479">Metal-binding</keyword>
<keyword id="KW-1185">Reference proteome</keyword>
<dbReference type="EC" id="3.1.1.17"/>
<dbReference type="EMBL" id="AB035445">
    <property type="protein sequence ID" value="BAA88079.1"/>
    <property type="molecule type" value="mRNA"/>
</dbReference>
<dbReference type="RefSeq" id="NP_001075472.1">
    <property type="nucleotide sequence ID" value="NM_001082003.1"/>
</dbReference>
<dbReference type="RefSeq" id="XP_008270558.1">
    <property type="nucleotide sequence ID" value="XM_008272336.4"/>
</dbReference>
<dbReference type="SMR" id="Q9TTJ6"/>
<dbReference type="FunCoup" id="Q9TTJ6">
    <property type="interactions" value="230"/>
</dbReference>
<dbReference type="STRING" id="9986.ENSOCUP00000022189"/>
<dbReference type="PaxDb" id="9986-ENSOCUP00000022189"/>
<dbReference type="Ensembl" id="ENSOCUT00000028528.3">
    <property type="protein sequence ID" value="ENSOCUP00000022189.1"/>
    <property type="gene ID" value="ENSOCUG00000023725.3"/>
</dbReference>
<dbReference type="GeneID" id="100008619"/>
<dbReference type="KEGG" id="ocu:100008619"/>
<dbReference type="CTD" id="9104"/>
<dbReference type="eggNOG" id="KOG4499">
    <property type="taxonomic scope" value="Eukaryota"/>
</dbReference>
<dbReference type="GeneTree" id="ENSGT00390000014995"/>
<dbReference type="HOGENOM" id="CLU_036110_3_2_1"/>
<dbReference type="InParanoid" id="Q9TTJ6"/>
<dbReference type="OMA" id="PVNCKIG"/>
<dbReference type="OrthoDB" id="423498at2759"/>
<dbReference type="TreeFam" id="TF323663"/>
<dbReference type="UniPathway" id="UPA00991">
    <property type="reaction ID" value="UER00938"/>
</dbReference>
<dbReference type="Proteomes" id="UP000001811">
    <property type="component" value="Chromosome X"/>
</dbReference>
<dbReference type="Bgee" id="ENSOCUG00000023725">
    <property type="expression patterns" value="Expressed in liver and 15 other cell types or tissues"/>
</dbReference>
<dbReference type="GO" id="GO:0005737">
    <property type="term" value="C:cytoplasm"/>
    <property type="evidence" value="ECO:0007669"/>
    <property type="project" value="UniProtKB-SubCell"/>
</dbReference>
<dbReference type="GO" id="GO:0005634">
    <property type="term" value="C:nucleus"/>
    <property type="evidence" value="ECO:0007669"/>
    <property type="project" value="Ensembl"/>
</dbReference>
<dbReference type="GO" id="GO:0005509">
    <property type="term" value="F:calcium ion binding"/>
    <property type="evidence" value="ECO:0000250"/>
    <property type="project" value="UniProtKB"/>
</dbReference>
<dbReference type="GO" id="GO:0030234">
    <property type="term" value="F:enzyme regulator activity"/>
    <property type="evidence" value="ECO:0007669"/>
    <property type="project" value="InterPro"/>
</dbReference>
<dbReference type="GO" id="GO:0004341">
    <property type="term" value="F:gluconolactonase activity"/>
    <property type="evidence" value="ECO:0000250"/>
    <property type="project" value="UniProtKB"/>
</dbReference>
<dbReference type="GO" id="GO:0008270">
    <property type="term" value="F:zinc ion binding"/>
    <property type="evidence" value="ECO:0000250"/>
    <property type="project" value="UniProtKB"/>
</dbReference>
<dbReference type="GO" id="GO:0019853">
    <property type="term" value="P:L-ascorbic acid biosynthetic process"/>
    <property type="evidence" value="ECO:0000250"/>
    <property type="project" value="UniProtKB"/>
</dbReference>
<dbReference type="FunFam" id="2.120.10.30:FF:000027">
    <property type="entry name" value="Regucalcin homologue"/>
    <property type="match status" value="1"/>
</dbReference>
<dbReference type="Gene3D" id="2.120.10.30">
    <property type="entry name" value="TolB, C-terminal domain"/>
    <property type="match status" value="1"/>
</dbReference>
<dbReference type="InterPro" id="IPR011042">
    <property type="entry name" value="6-blade_b-propeller_TolB-like"/>
</dbReference>
<dbReference type="InterPro" id="IPR008367">
    <property type="entry name" value="Regucalcin"/>
</dbReference>
<dbReference type="InterPro" id="IPR013658">
    <property type="entry name" value="SGL"/>
</dbReference>
<dbReference type="InterPro" id="IPR005511">
    <property type="entry name" value="SMP-30"/>
</dbReference>
<dbReference type="PANTHER" id="PTHR10907">
    <property type="entry name" value="REGUCALCIN"/>
    <property type="match status" value="1"/>
</dbReference>
<dbReference type="PANTHER" id="PTHR10907:SF54">
    <property type="entry name" value="REGUCALCIN"/>
    <property type="match status" value="1"/>
</dbReference>
<dbReference type="Pfam" id="PF08450">
    <property type="entry name" value="SGL"/>
    <property type="match status" value="1"/>
</dbReference>
<dbReference type="PRINTS" id="PR01791">
    <property type="entry name" value="REGUCALCIN"/>
</dbReference>
<dbReference type="PRINTS" id="PR01790">
    <property type="entry name" value="SMP30FAMILY"/>
</dbReference>
<dbReference type="SUPFAM" id="SSF63829">
    <property type="entry name" value="Calcium-dependent phosphotriesterase"/>
    <property type="match status" value="1"/>
</dbReference>
<proteinExistence type="evidence at transcript level"/>